<dbReference type="EMBL" id="CP000686">
    <property type="protein sequence ID" value="ABQ89577.1"/>
    <property type="molecule type" value="Genomic_DNA"/>
</dbReference>
<dbReference type="RefSeq" id="WP_011955930.1">
    <property type="nucleotide sequence ID" value="NC_009523.1"/>
</dbReference>
<dbReference type="SMR" id="A5USH4"/>
<dbReference type="STRING" id="357808.RoseRS_1170"/>
<dbReference type="KEGG" id="rrs:RoseRS_1170"/>
<dbReference type="eggNOG" id="COG0097">
    <property type="taxonomic scope" value="Bacteria"/>
</dbReference>
<dbReference type="HOGENOM" id="CLU_065464_1_2_0"/>
<dbReference type="OrthoDB" id="9805007at2"/>
<dbReference type="Proteomes" id="UP000006554">
    <property type="component" value="Chromosome"/>
</dbReference>
<dbReference type="GO" id="GO:0022625">
    <property type="term" value="C:cytosolic large ribosomal subunit"/>
    <property type="evidence" value="ECO:0007669"/>
    <property type="project" value="TreeGrafter"/>
</dbReference>
<dbReference type="GO" id="GO:0019843">
    <property type="term" value="F:rRNA binding"/>
    <property type="evidence" value="ECO:0007669"/>
    <property type="project" value="UniProtKB-UniRule"/>
</dbReference>
<dbReference type="GO" id="GO:0003735">
    <property type="term" value="F:structural constituent of ribosome"/>
    <property type="evidence" value="ECO:0007669"/>
    <property type="project" value="InterPro"/>
</dbReference>
<dbReference type="GO" id="GO:0002181">
    <property type="term" value="P:cytoplasmic translation"/>
    <property type="evidence" value="ECO:0007669"/>
    <property type="project" value="TreeGrafter"/>
</dbReference>
<dbReference type="FunFam" id="3.90.930.12:FF:000001">
    <property type="entry name" value="50S ribosomal protein L6"/>
    <property type="match status" value="1"/>
</dbReference>
<dbReference type="FunFam" id="3.90.930.12:FF:000002">
    <property type="entry name" value="50S ribosomal protein L6"/>
    <property type="match status" value="1"/>
</dbReference>
<dbReference type="Gene3D" id="3.90.930.12">
    <property type="entry name" value="Ribosomal protein L6, alpha-beta domain"/>
    <property type="match status" value="2"/>
</dbReference>
<dbReference type="HAMAP" id="MF_01365_B">
    <property type="entry name" value="Ribosomal_uL6_B"/>
    <property type="match status" value="1"/>
</dbReference>
<dbReference type="InterPro" id="IPR000702">
    <property type="entry name" value="Ribosomal_uL6-like"/>
</dbReference>
<dbReference type="InterPro" id="IPR036789">
    <property type="entry name" value="Ribosomal_uL6-like_a/b-dom_sf"/>
</dbReference>
<dbReference type="InterPro" id="IPR020040">
    <property type="entry name" value="Ribosomal_uL6_a/b-dom"/>
</dbReference>
<dbReference type="InterPro" id="IPR019906">
    <property type="entry name" value="Ribosomal_uL6_bac-type"/>
</dbReference>
<dbReference type="NCBIfam" id="TIGR03654">
    <property type="entry name" value="L6_bact"/>
    <property type="match status" value="1"/>
</dbReference>
<dbReference type="PANTHER" id="PTHR11655">
    <property type="entry name" value="60S/50S RIBOSOMAL PROTEIN L6/L9"/>
    <property type="match status" value="1"/>
</dbReference>
<dbReference type="PANTHER" id="PTHR11655:SF14">
    <property type="entry name" value="LARGE RIBOSOMAL SUBUNIT PROTEIN UL6M"/>
    <property type="match status" value="1"/>
</dbReference>
<dbReference type="Pfam" id="PF00347">
    <property type="entry name" value="Ribosomal_L6"/>
    <property type="match status" value="2"/>
</dbReference>
<dbReference type="PIRSF" id="PIRSF002162">
    <property type="entry name" value="Ribosomal_L6"/>
    <property type="match status" value="1"/>
</dbReference>
<dbReference type="PRINTS" id="PR00059">
    <property type="entry name" value="RIBOSOMALL6"/>
</dbReference>
<dbReference type="SUPFAM" id="SSF56053">
    <property type="entry name" value="Ribosomal protein L6"/>
    <property type="match status" value="2"/>
</dbReference>
<sequence length="187" mass="20850">MSRIGKKPIPVPRGVEVTITEENRVTVKGPKGTLSQQFSPEMLITHENGVITVARPSDDKRHRALHGLTRSLIANMVTGVTEGYQRILEITGIGYRAAREGKNLVLQVGFSHPIRVTPPEGITFEVLERRSANEPQQVIIRGIDKQKVGEEAAKLRALRPPEPYKGYGIKYRDERIRRKAGKAGKAR</sequence>
<evidence type="ECO:0000255" key="1">
    <source>
        <dbReference type="HAMAP-Rule" id="MF_01365"/>
    </source>
</evidence>
<evidence type="ECO:0000305" key="2"/>
<protein>
    <recommendedName>
        <fullName evidence="1">Large ribosomal subunit protein uL6</fullName>
    </recommendedName>
    <alternativeName>
        <fullName evidence="2">50S ribosomal protein L6</fullName>
    </alternativeName>
</protein>
<keyword id="KW-0687">Ribonucleoprotein</keyword>
<keyword id="KW-0689">Ribosomal protein</keyword>
<keyword id="KW-0694">RNA-binding</keyword>
<keyword id="KW-0699">rRNA-binding</keyword>
<feature type="chain" id="PRO_1000055299" description="Large ribosomal subunit protein uL6">
    <location>
        <begin position="1"/>
        <end position="187"/>
    </location>
</feature>
<accession>A5USH4</accession>
<proteinExistence type="inferred from homology"/>
<organism>
    <name type="scientific">Roseiflexus sp. (strain RS-1)</name>
    <dbReference type="NCBI Taxonomy" id="357808"/>
    <lineage>
        <taxon>Bacteria</taxon>
        <taxon>Bacillati</taxon>
        <taxon>Chloroflexota</taxon>
        <taxon>Chloroflexia</taxon>
        <taxon>Chloroflexales</taxon>
        <taxon>Roseiflexineae</taxon>
        <taxon>Roseiflexaceae</taxon>
        <taxon>Roseiflexus</taxon>
    </lineage>
</organism>
<gene>
    <name evidence="1" type="primary">rplF</name>
    <name type="ordered locus">RoseRS_1170</name>
</gene>
<reference key="1">
    <citation type="submission" date="2007-04" db="EMBL/GenBank/DDBJ databases">
        <title>Complete sequence of Roseiflexus sp. RS-1.</title>
        <authorList>
            <consortium name="US DOE Joint Genome Institute"/>
            <person name="Copeland A."/>
            <person name="Lucas S."/>
            <person name="Lapidus A."/>
            <person name="Barry K."/>
            <person name="Detter J.C."/>
            <person name="Glavina del Rio T."/>
            <person name="Hammon N."/>
            <person name="Israni S."/>
            <person name="Dalin E."/>
            <person name="Tice H."/>
            <person name="Pitluck S."/>
            <person name="Chertkov O."/>
            <person name="Brettin T."/>
            <person name="Bruce D."/>
            <person name="Han C."/>
            <person name="Schmutz J."/>
            <person name="Larimer F."/>
            <person name="Land M."/>
            <person name="Hauser L."/>
            <person name="Kyrpides N."/>
            <person name="Mikhailova N."/>
            <person name="Bryant D.A."/>
            <person name="Richardson P."/>
        </authorList>
    </citation>
    <scope>NUCLEOTIDE SEQUENCE [LARGE SCALE GENOMIC DNA]</scope>
    <source>
        <strain>RS-1</strain>
    </source>
</reference>
<name>RL6_ROSS1</name>
<comment type="function">
    <text evidence="1">This protein binds to the 23S rRNA, and is important in its secondary structure. It is located near the subunit interface in the base of the L7/L12 stalk, and near the tRNA binding site of the peptidyltransferase center.</text>
</comment>
<comment type="subunit">
    <text evidence="1">Part of the 50S ribosomal subunit.</text>
</comment>
<comment type="similarity">
    <text evidence="1">Belongs to the universal ribosomal protein uL6 family.</text>
</comment>